<accession>Q3ZZM2</accession>
<name>RL23_DEHMC</name>
<reference key="1">
    <citation type="journal article" date="2005" name="Nat. Biotechnol.">
        <title>Genome sequence of the chlorinated compound-respiring bacterium Dehalococcoides species strain CBDB1.</title>
        <authorList>
            <person name="Kube M."/>
            <person name="Beck A."/>
            <person name="Zinder S.H."/>
            <person name="Kuhl H."/>
            <person name="Reinhardt R."/>
            <person name="Adrian L."/>
        </authorList>
    </citation>
    <scope>NUCLEOTIDE SEQUENCE [LARGE SCALE GENOMIC DNA]</scope>
    <source>
        <strain>CBDB1</strain>
    </source>
</reference>
<organism>
    <name type="scientific">Dehalococcoides mccartyi (strain CBDB1)</name>
    <dbReference type="NCBI Taxonomy" id="255470"/>
    <lineage>
        <taxon>Bacteria</taxon>
        <taxon>Bacillati</taxon>
        <taxon>Chloroflexota</taxon>
        <taxon>Dehalococcoidia</taxon>
        <taxon>Dehalococcoidales</taxon>
        <taxon>Dehalococcoidaceae</taxon>
        <taxon>Dehalococcoides</taxon>
    </lineage>
</organism>
<proteinExistence type="inferred from homology"/>
<gene>
    <name evidence="1" type="primary">rplW</name>
    <name type="ordered locus">cbdbA441</name>
</gene>
<keyword id="KW-0687">Ribonucleoprotein</keyword>
<keyword id="KW-0689">Ribosomal protein</keyword>
<keyword id="KW-0694">RNA-binding</keyword>
<keyword id="KW-0699">rRNA-binding</keyword>
<feature type="chain" id="PRO_1000068074" description="Large ribosomal subunit protein uL23">
    <location>
        <begin position="1"/>
        <end position="94"/>
    </location>
</feature>
<sequence length="94" mass="10638">MNLYEVLRRPLISEKNSVHATQNKYAFEIAKGANKRMVKLAVEQAFNVTVEDVNMLHIPGKQKRMGRNLIQTAGLRKAIITLKEGDKITLFEGV</sequence>
<protein>
    <recommendedName>
        <fullName evidence="1">Large ribosomal subunit protein uL23</fullName>
    </recommendedName>
    <alternativeName>
        <fullName evidence="2">50S ribosomal protein L23</fullName>
    </alternativeName>
</protein>
<dbReference type="EMBL" id="AJ965256">
    <property type="protein sequence ID" value="CAI82641.1"/>
    <property type="molecule type" value="Genomic_DNA"/>
</dbReference>
<dbReference type="RefSeq" id="WP_011308998.1">
    <property type="nucleotide sequence ID" value="NC_007356.1"/>
</dbReference>
<dbReference type="SMR" id="Q3ZZM2"/>
<dbReference type="KEGG" id="deh:cbdbA441"/>
<dbReference type="HOGENOM" id="CLU_037562_3_2_0"/>
<dbReference type="Proteomes" id="UP000000433">
    <property type="component" value="Chromosome"/>
</dbReference>
<dbReference type="GO" id="GO:1990904">
    <property type="term" value="C:ribonucleoprotein complex"/>
    <property type="evidence" value="ECO:0007669"/>
    <property type="project" value="UniProtKB-KW"/>
</dbReference>
<dbReference type="GO" id="GO:0005840">
    <property type="term" value="C:ribosome"/>
    <property type="evidence" value="ECO:0007669"/>
    <property type="project" value="UniProtKB-KW"/>
</dbReference>
<dbReference type="GO" id="GO:0019843">
    <property type="term" value="F:rRNA binding"/>
    <property type="evidence" value="ECO:0007669"/>
    <property type="project" value="UniProtKB-UniRule"/>
</dbReference>
<dbReference type="GO" id="GO:0003735">
    <property type="term" value="F:structural constituent of ribosome"/>
    <property type="evidence" value="ECO:0007669"/>
    <property type="project" value="InterPro"/>
</dbReference>
<dbReference type="GO" id="GO:0006412">
    <property type="term" value="P:translation"/>
    <property type="evidence" value="ECO:0007669"/>
    <property type="project" value="UniProtKB-UniRule"/>
</dbReference>
<dbReference type="FunFam" id="3.30.70.330:FF:000001">
    <property type="entry name" value="50S ribosomal protein L23"/>
    <property type="match status" value="1"/>
</dbReference>
<dbReference type="Gene3D" id="3.30.70.330">
    <property type="match status" value="1"/>
</dbReference>
<dbReference type="HAMAP" id="MF_01369_B">
    <property type="entry name" value="Ribosomal_uL23_B"/>
    <property type="match status" value="1"/>
</dbReference>
<dbReference type="InterPro" id="IPR012677">
    <property type="entry name" value="Nucleotide-bd_a/b_plait_sf"/>
</dbReference>
<dbReference type="InterPro" id="IPR013025">
    <property type="entry name" value="Ribosomal_uL23-like"/>
</dbReference>
<dbReference type="InterPro" id="IPR012678">
    <property type="entry name" value="Ribosomal_uL23/eL15/eS24_sf"/>
</dbReference>
<dbReference type="InterPro" id="IPR001014">
    <property type="entry name" value="Ribosomal_uL23_CS"/>
</dbReference>
<dbReference type="NCBIfam" id="NF004363">
    <property type="entry name" value="PRK05738.2-4"/>
    <property type="match status" value="1"/>
</dbReference>
<dbReference type="PANTHER" id="PTHR11620">
    <property type="entry name" value="60S RIBOSOMAL PROTEIN L23A"/>
    <property type="match status" value="1"/>
</dbReference>
<dbReference type="Pfam" id="PF00276">
    <property type="entry name" value="Ribosomal_L23"/>
    <property type="match status" value="1"/>
</dbReference>
<dbReference type="SUPFAM" id="SSF54189">
    <property type="entry name" value="Ribosomal proteins S24e, L23 and L15e"/>
    <property type="match status" value="1"/>
</dbReference>
<dbReference type="PROSITE" id="PS00050">
    <property type="entry name" value="RIBOSOMAL_L23"/>
    <property type="match status" value="1"/>
</dbReference>
<evidence type="ECO:0000255" key="1">
    <source>
        <dbReference type="HAMAP-Rule" id="MF_01369"/>
    </source>
</evidence>
<evidence type="ECO:0000305" key="2"/>
<comment type="function">
    <text evidence="1">One of the early assembly proteins it binds 23S rRNA. One of the proteins that surrounds the polypeptide exit tunnel on the outside of the ribosome. Forms the main docking site for trigger factor binding to the ribosome.</text>
</comment>
<comment type="subunit">
    <text evidence="1">Part of the 50S ribosomal subunit. Contacts protein L29, and trigger factor when it is bound to the ribosome.</text>
</comment>
<comment type="similarity">
    <text evidence="1">Belongs to the universal ribosomal protein uL23 family.</text>
</comment>